<comment type="function">
    <text evidence="1">Catalyzes the attachment of serine to tRNA(Ser). Is also able to aminoacylate tRNA(Sec) with serine, to form the misacylated tRNA L-seryl-tRNA(Sec), which will be further converted into selenocysteinyl-tRNA(Sec).</text>
</comment>
<comment type="catalytic activity">
    <reaction evidence="1">
        <text>tRNA(Ser) + L-serine + ATP = L-seryl-tRNA(Ser) + AMP + diphosphate + H(+)</text>
        <dbReference type="Rhea" id="RHEA:12292"/>
        <dbReference type="Rhea" id="RHEA-COMP:9669"/>
        <dbReference type="Rhea" id="RHEA-COMP:9703"/>
        <dbReference type="ChEBI" id="CHEBI:15378"/>
        <dbReference type="ChEBI" id="CHEBI:30616"/>
        <dbReference type="ChEBI" id="CHEBI:33019"/>
        <dbReference type="ChEBI" id="CHEBI:33384"/>
        <dbReference type="ChEBI" id="CHEBI:78442"/>
        <dbReference type="ChEBI" id="CHEBI:78533"/>
        <dbReference type="ChEBI" id="CHEBI:456215"/>
        <dbReference type="EC" id="6.1.1.11"/>
    </reaction>
</comment>
<comment type="catalytic activity">
    <reaction evidence="1">
        <text>tRNA(Sec) + L-serine + ATP = L-seryl-tRNA(Sec) + AMP + diphosphate + H(+)</text>
        <dbReference type="Rhea" id="RHEA:42580"/>
        <dbReference type="Rhea" id="RHEA-COMP:9742"/>
        <dbReference type="Rhea" id="RHEA-COMP:10128"/>
        <dbReference type="ChEBI" id="CHEBI:15378"/>
        <dbReference type="ChEBI" id="CHEBI:30616"/>
        <dbReference type="ChEBI" id="CHEBI:33019"/>
        <dbReference type="ChEBI" id="CHEBI:33384"/>
        <dbReference type="ChEBI" id="CHEBI:78442"/>
        <dbReference type="ChEBI" id="CHEBI:78533"/>
        <dbReference type="ChEBI" id="CHEBI:456215"/>
        <dbReference type="EC" id="6.1.1.11"/>
    </reaction>
</comment>
<comment type="pathway">
    <text evidence="1">Aminoacyl-tRNA biosynthesis; selenocysteinyl-tRNA(Sec) biosynthesis; L-seryl-tRNA(Sec) from L-serine and tRNA(Sec): step 1/1.</text>
</comment>
<comment type="subunit">
    <text evidence="1">Homodimer. The tRNA molecule binds across the dimer.</text>
</comment>
<comment type="subcellular location">
    <subcellularLocation>
        <location evidence="1">Cytoplasm</location>
    </subcellularLocation>
</comment>
<comment type="domain">
    <text evidence="1">Consists of two distinct domains, a catalytic core and a N-terminal extension that is involved in tRNA binding.</text>
</comment>
<comment type="similarity">
    <text evidence="1">Belongs to the class-II aminoacyl-tRNA synthetase family. Type-1 seryl-tRNA synthetase subfamily.</text>
</comment>
<reference key="1">
    <citation type="journal article" date="2007" name="PLoS Genet.">
        <title>Patterns and implications of gene gain and loss in the evolution of Prochlorococcus.</title>
        <authorList>
            <person name="Kettler G.C."/>
            <person name="Martiny A.C."/>
            <person name="Huang K."/>
            <person name="Zucker J."/>
            <person name="Coleman M.L."/>
            <person name="Rodrigue S."/>
            <person name="Chen F."/>
            <person name="Lapidus A."/>
            <person name="Ferriera S."/>
            <person name="Johnson J."/>
            <person name="Steglich C."/>
            <person name="Church G.M."/>
            <person name="Richardson P."/>
            <person name="Chisholm S.W."/>
        </authorList>
    </citation>
    <scope>NUCLEOTIDE SEQUENCE [LARGE SCALE GENOMIC DNA]</scope>
    <source>
        <strain>MIT 9515</strain>
    </source>
</reference>
<feature type="chain" id="PRO_1000019767" description="Serine--tRNA ligase">
    <location>
        <begin position="1"/>
        <end position="425"/>
    </location>
</feature>
<feature type="binding site" evidence="1">
    <location>
        <begin position="233"/>
        <end position="235"/>
    </location>
    <ligand>
        <name>L-serine</name>
        <dbReference type="ChEBI" id="CHEBI:33384"/>
    </ligand>
</feature>
<feature type="binding site" evidence="1">
    <location>
        <begin position="264"/>
        <end position="266"/>
    </location>
    <ligand>
        <name>ATP</name>
        <dbReference type="ChEBI" id="CHEBI:30616"/>
    </ligand>
</feature>
<feature type="binding site" evidence="1">
    <location>
        <position position="287"/>
    </location>
    <ligand>
        <name>L-serine</name>
        <dbReference type="ChEBI" id="CHEBI:33384"/>
    </ligand>
</feature>
<feature type="binding site" evidence="1">
    <location>
        <begin position="351"/>
        <end position="354"/>
    </location>
    <ligand>
        <name>ATP</name>
        <dbReference type="ChEBI" id="CHEBI:30616"/>
    </ligand>
</feature>
<feature type="binding site" evidence="1">
    <location>
        <position position="385"/>
    </location>
    <ligand>
        <name>L-serine</name>
        <dbReference type="ChEBI" id="CHEBI:33384"/>
    </ligand>
</feature>
<dbReference type="EC" id="6.1.1.11" evidence="1"/>
<dbReference type="EMBL" id="CP000552">
    <property type="protein sequence ID" value="ABM72567.1"/>
    <property type="molecule type" value="Genomic_DNA"/>
</dbReference>
<dbReference type="RefSeq" id="WP_011820664.1">
    <property type="nucleotide sequence ID" value="NC_008817.1"/>
</dbReference>
<dbReference type="SMR" id="A2BXQ6"/>
<dbReference type="STRING" id="167542.P9515_13601"/>
<dbReference type="GeneID" id="60202068"/>
<dbReference type="KEGG" id="pmc:P9515_13601"/>
<dbReference type="eggNOG" id="COG0172">
    <property type="taxonomic scope" value="Bacteria"/>
</dbReference>
<dbReference type="HOGENOM" id="CLU_023797_1_1_3"/>
<dbReference type="OrthoDB" id="9804647at2"/>
<dbReference type="UniPathway" id="UPA00906">
    <property type="reaction ID" value="UER00895"/>
</dbReference>
<dbReference type="Proteomes" id="UP000001589">
    <property type="component" value="Chromosome"/>
</dbReference>
<dbReference type="GO" id="GO:0005737">
    <property type="term" value="C:cytoplasm"/>
    <property type="evidence" value="ECO:0007669"/>
    <property type="project" value="UniProtKB-SubCell"/>
</dbReference>
<dbReference type="GO" id="GO:0005524">
    <property type="term" value="F:ATP binding"/>
    <property type="evidence" value="ECO:0007669"/>
    <property type="project" value="UniProtKB-UniRule"/>
</dbReference>
<dbReference type="GO" id="GO:0004828">
    <property type="term" value="F:serine-tRNA ligase activity"/>
    <property type="evidence" value="ECO:0007669"/>
    <property type="project" value="UniProtKB-UniRule"/>
</dbReference>
<dbReference type="GO" id="GO:0016260">
    <property type="term" value="P:selenocysteine biosynthetic process"/>
    <property type="evidence" value="ECO:0007669"/>
    <property type="project" value="UniProtKB-UniRule"/>
</dbReference>
<dbReference type="GO" id="GO:0006434">
    <property type="term" value="P:seryl-tRNA aminoacylation"/>
    <property type="evidence" value="ECO:0007669"/>
    <property type="project" value="UniProtKB-UniRule"/>
</dbReference>
<dbReference type="CDD" id="cd00770">
    <property type="entry name" value="SerRS_core"/>
    <property type="match status" value="1"/>
</dbReference>
<dbReference type="Gene3D" id="3.30.930.10">
    <property type="entry name" value="Bira Bifunctional Protein, Domain 2"/>
    <property type="match status" value="1"/>
</dbReference>
<dbReference type="Gene3D" id="1.10.287.40">
    <property type="entry name" value="Serine-tRNA synthetase, tRNA binding domain"/>
    <property type="match status" value="1"/>
</dbReference>
<dbReference type="HAMAP" id="MF_00176">
    <property type="entry name" value="Ser_tRNA_synth_type1"/>
    <property type="match status" value="1"/>
</dbReference>
<dbReference type="InterPro" id="IPR002314">
    <property type="entry name" value="aa-tRNA-synt_IIb"/>
</dbReference>
<dbReference type="InterPro" id="IPR006195">
    <property type="entry name" value="aa-tRNA-synth_II"/>
</dbReference>
<dbReference type="InterPro" id="IPR045864">
    <property type="entry name" value="aa-tRNA-synth_II/BPL/LPL"/>
</dbReference>
<dbReference type="InterPro" id="IPR002317">
    <property type="entry name" value="Ser-tRNA-ligase_type_1"/>
</dbReference>
<dbReference type="InterPro" id="IPR015866">
    <property type="entry name" value="Ser-tRNA-synth_1_N"/>
</dbReference>
<dbReference type="InterPro" id="IPR042103">
    <property type="entry name" value="SerRS_1_N_sf"/>
</dbReference>
<dbReference type="InterPro" id="IPR033729">
    <property type="entry name" value="SerRS_core"/>
</dbReference>
<dbReference type="InterPro" id="IPR010978">
    <property type="entry name" value="tRNA-bd_arm"/>
</dbReference>
<dbReference type="NCBIfam" id="TIGR00414">
    <property type="entry name" value="serS"/>
    <property type="match status" value="1"/>
</dbReference>
<dbReference type="PANTHER" id="PTHR43697:SF1">
    <property type="entry name" value="SERINE--TRNA LIGASE"/>
    <property type="match status" value="1"/>
</dbReference>
<dbReference type="PANTHER" id="PTHR43697">
    <property type="entry name" value="SERYL-TRNA SYNTHETASE"/>
    <property type="match status" value="1"/>
</dbReference>
<dbReference type="Pfam" id="PF02403">
    <property type="entry name" value="Seryl_tRNA_N"/>
    <property type="match status" value="1"/>
</dbReference>
<dbReference type="Pfam" id="PF00587">
    <property type="entry name" value="tRNA-synt_2b"/>
    <property type="match status" value="1"/>
</dbReference>
<dbReference type="PIRSF" id="PIRSF001529">
    <property type="entry name" value="Ser-tRNA-synth_IIa"/>
    <property type="match status" value="1"/>
</dbReference>
<dbReference type="PRINTS" id="PR00981">
    <property type="entry name" value="TRNASYNTHSER"/>
</dbReference>
<dbReference type="SUPFAM" id="SSF55681">
    <property type="entry name" value="Class II aaRS and biotin synthetases"/>
    <property type="match status" value="1"/>
</dbReference>
<dbReference type="SUPFAM" id="SSF46589">
    <property type="entry name" value="tRNA-binding arm"/>
    <property type="match status" value="1"/>
</dbReference>
<dbReference type="PROSITE" id="PS50862">
    <property type="entry name" value="AA_TRNA_LIGASE_II"/>
    <property type="match status" value="1"/>
</dbReference>
<evidence type="ECO:0000255" key="1">
    <source>
        <dbReference type="HAMAP-Rule" id="MF_00176"/>
    </source>
</evidence>
<sequence length="425" mass="48453">MLDQKLIRENPTFVENNLSLRGKFYDIHSIHKITVERKEIDIKISSLQSESKKLSKIIGQEIRNPNNANSQELNKLKEQGNKYRIKVSEFEEKKRILDQQIRDEILKLPNFPSKDAPFGENESNNIQIKEWGDPLKKDNLKTHWEIGENLKLFDSIKSTKIAKSRFITLSGNGARLERALINFMLDVHSNNGYLELMPPALVNSESLQGSGQLPKFSNESFKCANDDLWLSPTAEVPLTAFHKNEIIDPKLLPLKYVAYSPCFRREAGSYGRDTKGLIRLHQFNKVELYWFSDPNKSLEAHKEITADAESILKKLNLPYRLVDICTGDLGFSSSRTFDLEVWLPSNKCYREISSCSNCRDFQARRSSIRTKIDKKTSYIHTLNGSGLAIGRTMAAILENGQRPDGSVKIPDVLVPYFGSSLIKTN</sequence>
<proteinExistence type="inferred from homology"/>
<gene>
    <name evidence="1" type="primary">serS</name>
    <name type="ordered locus">P9515_13601</name>
</gene>
<keyword id="KW-0030">Aminoacyl-tRNA synthetase</keyword>
<keyword id="KW-0067">ATP-binding</keyword>
<keyword id="KW-0963">Cytoplasm</keyword>
<keyword id="KW-0436">Ligase</keyword>
<keyword id="KW-0547">Nucleotide-binding</keyword>
<keyword id="KW-0648">Protein biosynthesis</keyword>
<protein>
    <recommendedName>
        <fullName evidence="1">Serine--tRNA ligase</fullName>
        <ecNumber evidence="1">6.1.1.11</ecNumber>
    </recommendedName>
    <alternativeName>
        <fullName evidence="1">Seryl-tRNA synthetase</fullName>
        <shortName evidence="1">SerRS</shortName>
    </alternativeName>
    <alternativeName>
        <fullName evidence="1">Seryl-tRNA(Ser/Sec) synthetase</fullName>
    </alternativeName>
</protein>
<name>SYS_PROM5</name>
<accession>A2BXQ6</accession>
<organism>
    <name type="scientific">Prochlorococcus marinus (strain MIT 9515)</name>
    <dbReference type="NCBI Taxonomy" id="167542"/>
    <lineage>
        <taxon>Bacteria</taxon>
        <taxon>Bacillati</taxon>
        <taxon>Cyanobacteriota</taxon>
        <taxon>Cyanophyceae</taxon>
        <taxon>Synechococcales</taxon>
        <taxon>Prochlorococcaceae</taxon>
        <taxon>Prochlorococcus</taxon>
    </lineage>
</organism>